<protein>
    <recommendedName>
        <fullName>C2 domain-containing protein 3</fullName>
    </recommendedName>
    <alternativeName>
        <fullName>Protein hearty</fullName>
    </alternativeName>
</protein>
<proteinExistence type="evidence at protein level"/>
<gene>
    <name type="primary">C2cd3</name>
    <name type="synonym">Hty</name>
</gene>
<accession>Q52KB6</accession>
<accession>E9QL99</accession>
<accession>Q3UFQ3</accession>
<accession>Q80V48</accession>
<accession>Q8BXE5</accession>
<feature type="chain" id="PRO_0000311240" description="C2 domain-containing protein 3">
    <location>
        <begin position="1"/>
        <end position="2323"/>
    </location>
</feature>
<feature type="domain" description="C2 1" evidence="3">
    <location>
        <begin position="504"/>
        <end position="663"/>
    </location>
</feature>
<feature type="domain" description="C2 2" evidence="3">
    <location>
        <begin position="771"/>
        <end position="903"/>
    </location>
</feature>
<feature type="domain" description="C2 3" evidence="3">
    <location>
        <begin position="969"/>
        <end position="1131"/>
    </location>
</feature>
<feature type="domain" description="C2 4" evidence="3">
    <location>
        <begin position="1155"/>
        <end position="1323"/>
    </location>
</feature>
<feature type="domain" description="C2 5" evidence="3">
    <location>
        <begin position="1383"/>
        <end position="1517"/>
    </location>
</feature>
<feature type="domain" description="C2 6" evidence="3">
    <location>
        <begin position="1598"/>
        <end position="1726"/>
    </location>
</feature>
<feature type="region of interest" description="Disordered" evidence="4">
    <location>
        <begin position="1"/>
        <end position="27"/>
    </location>
</feature>
<feature type="region of interest" description="Disordered" evidence="4">
    <location>
        <begin position="193"/>
        <end position="215"/>
    </location>
</feature>
<feature type="region of interest" description="Disordered" evidence="4">
    <location>
        <begin position="402"/>
        <end position="426"/>
    </location>
</feature>
<feature type="region of interest" description="Disordered" evidence="4">
    <location>
        <begin position="444"/>
        <end position="509"/>
    </location>
</feature>
<feature type="region of interest" description="Disordered" evidence="4">
    <location>
        <begin position="537"/>
        <end position="556"/>
    </location>
</feature>
<feature type="region of interest" description="Disordered" evidence="4">
    <location>
        <begin position="698"/>
        <end position="745"/>
    </location>
</feature>
<feature type="region of interest" description="Disordered" evidence="4">
    <location>
        <begin position="1550"/>
        <end position="1599"/>
    </location>
</feature>
<feature type="region of interest" description="Disordered" evidence="4">
    <location>
        <begin position="1798"/>
        <end position="1824"/>
    </location>
</feature>
<feature type="region of interest" description="Disordered" evidence="4">
    <location>
        <begin position="1891"/>
        <end position="1918"/>
    </location>
</feature>
<feature type="region of interest" description="Disordered" evidence="4">
    <location>
        <begin position="1952"/>
        <end position="2013"/>
    </location>
</feature>
<feature type="region of interest" description="Disordered" evidence="4">
    <location>
        <begin position="2074"/>
        <end position="2163"/>
    </location>
</feature>
<feature type="region of interest" description="Disordered" evidence="4">
    <location>
        <begin position="2182"/>
        <end position="2231"/>
    </location>
</feature>
<feature type="region of interest" description="Disordered" evidence="4">
    <location>
        <begin position="2261"/>
        <end position="2323"/>
    </location>
</feature>
<feature type="compositionally biased region" description="Polar residues" evidence="4">
    <location>
        <begin position="200"/>
        <end position="209"/>
    </location>
</feature>
<feature type="compositionally biased region" description="Basic and acidic residues" evidence="4">
    <location>
        <begin position="474"/>
        <end position="483"/>
    </location>
</feature>
<feature type="compositionally biased region" description="Polar residues" evidence="4">
    <location>
        <begin position="698"/>
        <end position="735"/>
    </location>
</feature>
<feature type="compositionally biased region" description="Basic and acidic residues" evidence="4">
    <location>
        <begin position="1550"/>
        <end position="1574"/>
    </location>
</feature>
<feature type="compositionally biased region" description="Polar residues" evidence="4">
    <location>
        <begin position="1584"/>
        <end position="1599"/>
    </location>
</feature>
<feature type="compositionally biased region" description="Low complexity" evidence="4">
    <location>
        <begin position="1892"/>
        <end position="1904"/>
    </location>
</feature>
<feature type="compositionally biased region" description="Polar residues" evidence="4">
    <location>
        <begin position="1952"/>
        <end position="1965"/>
    </location>
</feature>
<feature type="compositionally biased region" description="Polar residues" evidence="4">
    <location>
        <begin position="2074"/>
        <end position="2083"/>
    </location>
</feature>
<feature type="compositionally biased region" description="Low complexity" evidence="4">
    <location>
        <begin position="2110"/>
        <end position="2125"/>
    </location>
</feature>
<feature type="compositionally biased region" description="Polar residues" evidence="4">
    <location>
        <begin position="2147"/>
        <end position="2158"/>
    </location>
</feature>
<feature type="compositionally biased region" description="Low complexity" evidence="4">
    <location>
        <begin position="2182"/>
        <end position="2197"/>
    </location>
</feature>
<feature type="compositionally biased region" description="Basic and acidic residues" evidence="4">
    <location>
        <begin position="2207"/>
        <end position="2216"/>
    </location>
</feature>
<feature type="compositionally biased region" description="Polar residues" evidence="4">
    <location>
        <begin position="2222"/>
        <end position="2231"/>
    </location>
</feature>
<feature type="modified residue" description="Phosphoserine" evidence="11">
    <location>
        <position position="453"/>
    </location>
</feature>
<feature type="modified residue" description="Phosphoserine" evidence="2">
    <location>
        <position position="713"/>
    </location>
</feature>
<feature type="modified residue" description="Phosphoserine" evidence="2">
    <location>
        <position position="1871"/>
    </location>
</feature>
<feature type="splice variant" id="VSP_029449" description="In isoform 2." evidence="9">
    <original>DLQ</original>
    <variation>GDY</variation>
    <location>
        <begin position="1941"/>
        <end position="1943"/>
    </location>
</feature>
<feature type="splice variant" id="VSP_029450" description="In isoform 2." evidence="9">
    <location>
        <begin position="1944"/>
        <end position="2323"/>
    </location>
</feature>
<feature type="splice variant" id="VSP_029451" description="In isoform 3." evidence="8">
    <original>QPAQGSPSQSGVCEGGA</original>
    <variation>CPEALSPQTLLHPSQPS</variation>
    <location>
        <begin position="2114"/>
        <end position="2130"/>
    </location>
</feature>
<feature type="splice variant" id="VSP_029452" description="In isoform 3." evidence="8">
    <location>
        <begin position="2131"/>
        <end position="2323"/>
    </location>
</feature>
<feature type="sequence conflict" description="In Ref. 1; BAC33048." evidence="10" ref="1">
    <original>Q</original>
    <variation>K</variation>
    <location>
        <position position="483"/>
    </location>
</feature>
<feature type="sequence conflict" description="In Ref. 3; AAH94430." evidence="10" ref="3">
    <original>E</original>
    <variation>G</variation>
    <location>
        <position position="587"/>
    </location>
</feature>
<reference key="1">
    <citation type="journal article" date="2005" name="Science">
        <title>The transcriptional landscape of the mammalian genome.</title>
        <authorList>
            <person name="Carninci P."/>
            <person name="Kasukawa T."/>
            <person name="Katayama S."/>
            <person name="Gough J."/>
            <person name="Frith M.C."/>
            <person name="Maeda N."/>
            <person name="Oyama R."/>
            <person name="Ravasi T."/>
            <person name="Lenhard B."/>
            <person name="Wells C."/>
            <person name="Kodzius R."/>
            <person name="Shimokawa K."/>
            <person name="Bajic V.B."/>
            <person name="Brenner S.E."/>
            <person name="Batalov S."/>
            <person name="Forrest A.R."/>
            <person name="Zavolan M."/>
            <person name="Davis M.J."/>
            <person name="Wilming L.G."/>
            <person name="Aidinis V."/>
            <person name="Allen J.E."/>
            <person name="Ambesi-Impiombato A."/>
            <person name="Apweiler R."/>
            <person name="Aturaliya R.N."/>
            <person name="Bailey T.L."/>
            <person name="Bansal M."/>
            <person name="Baxter L."/>
            <person name="Beisel K.W."/>
            <person name="Bersano T."/>
            <person name="Bono H."/>
            <person name="Chalk A.M."/>
            <person name="Chiu K.P."/>
            <person name="Choudhary V."/>
            <person name="Christoffels A."/>
            <person name="Clutterbuck D.R."/>
            <person name="Crowe M.L."/>
            <person name="Dalla E."/>
            <person name="Dalrymple B.P."/>
            <person name="de Bono B."/>
            <person name="Della Gatta G."/>
            <person name="di Bernardo D."/>
            <person name="Down T."/>
            <person name="Engstrom P."/>
            <person name="Fagiolini M."/>
            <person name="Faulkner G."/>
            <person name="Fletcher C.F."/>
            <person name="Fukushima T."/>
            <person name="Furuno M."/>
            <person name="Futaki S."/>
            <person name="Gariboldi M."/>
            <person name="Georgii-Hemming P."/>
            <person name="Gingeras T.R."/>
            <person name="Gojobori T."/>
            <person name="Green R.E."/>
            <person name="Gustincich S."/>
            <person name="Harbers M."/>
            <person name="Hayashi Y."/>
            <person name="Hensch T.K."/>
            <person name="Hirokawa N."/>
            <person name="Hill D."/>
            <person name="Huminiecki L."/>
            <person name="Iacono M."/>
            <person name="Ikeo K."/>
            <person name="Iwama A."/>
            <person name="Ishikawa T."/>
            <person name="Jakt M."/>
            <person name="Kanapin A."/>
            <person name="Katoh M."/>
            <person name="Kawasawa Y."/>
            <person name="Kelso J."/>
            <person name="Kitamura H."/>
            <person name="Kitano H."/>
            <person name="Kollias G."/>
            <person name="Krishnan S.P."/>
            <person name="Kruger A."/>
            <person name="Kummerfeld S.K."/>
            <person name="Kurochkin I.V."/>
            <person name="Lareau L.F."/>
            <person name="Lazarevic D."/>
            <person name="Lipovich L."/>
            <person name="Liu J."/>
            <person name="Liuni S."/>
            <person name="McWilliam S."/>
            <person name="Madan Babu M."/>
            <person name="Madera M."/>
            <person name="Marchionni L."/>
            <person name="Matsuda H."/>
            <person name="Matsuzawa S."/>
            <person name="Miki H."/>
            <person name="Mignone F."/>
            <person name="Miyake S."/>
            <person name="Morris K."/>
            <person name="Mottagui-Tabar S."/>
            <person name="Mulder N."/>
            <person name="Nakano N."/>
            <person name="Nakauchi H."/>
            <person name="Ng P."/>
            <person name="Nilsson R."/>
            <person name="Nishiguchi S."/>
            <person name="Nishikawa S."/>
            <person name="Nori F."/>
            <person name="Ohara O."/>
            <person name="Okazaki Y."/>
            <person name="Orlando V."/>
            <person name="Pang K.C."/>
            <person name="Pavan W.J."/>
            <person name="Pavesi G."/>
            <person name="Pesole G."/>
            <person name="Petrovsky N."/>
            <person name="Piazza S."/>
            <person name="Reed J."/>
            <person name="Reid J.F."/>
            <person name="Ring B.Z."/>
            <person name="Ringwald M."/>
            <person name="Rost B."/>
            <person name="Ruan Y."/>
            <person name="Salzberg S.L."/>
            <person name="Sandelin A."/>
            <person name="Schneider C."/>
            <person name="Schoenbach C."/>
            <person name="Sekiguchi K."/>
            <person name="Semple C.A."/>
            <person name="Seno S."/>
            <person name="Sessa L."/>
            <person name="Sheng Y."/>
            <person name="Shibata Y."/>
            <person name="Shimada H."/>
            <person name="Shimada K."/>
            <person name="Silva D."/>
            <person name="Sinclair B."/>
            <person name="Sperling S."/>
            <person name="Stupka E."/>
            <person name="Sugiura K."/>
            <person name="Sultana R."/>
            <person name="Takenaka Y."/>
            <person name="Taki K."/>
            <person name="Tammoja K."/>
            <person name="Tan S.L."/>
            <person name="Tang S."/>
            <person name="Taylor M.S."/>
            <person name="Tegner J."/>
            <person name="Teichmann S.A."/>
            <person name="Ueda H.R."/>
            <person name="van Nimwegen E."/>
            <person name="Verardo R."/>
            <person name="Wei C.L."/>
            <person name="Yagi K."/>
            <person name="Yamanishi H."/>
            <person name="Zabarovsky E."/>
            <person name="Zhu S."/>
            <person name="Zimmer A."/>
            <person name="Hide W."/>
            <person name="Bult C."/>
            <person name="Grimmond S.M."/>
            <person name="Teasdale R.D."/>
            <person name="Liu E.T."/>
            <person name="Brusic V."/>
            <person name="Quackenbush J."/>
            <person name="Wahlestedt C."/>
            <person name="Mattick J.S."/>
            <person name="Hume D.A."/>
            <person name="Kai C."/>
            <person name="Sasaki D."/>
            <person name="Tomaru Y."/>
            <person name="Fukuda S."/>
            <person name="Kanamori-Katayama M."/>
            <person name="Suzuki M."/>
            <person name="Aoki J."/>
            <person name="Arakawa T."/>
            <person name="Iida J."/>
            <person name="Imamura K."/>
            <person name="Itoh M."/>
            <person name="Kato T."/>
            <person name="Kawaji H."/>
            <person name="Kawagashira N."/>
            <person name="Kawashima T."/>
            <person name="Kojima M."/>
            <person name="Kondo S."/>
            <person name="Konno H."/>
            <person name="Nakano K."/>
            <person name="Ninomiya N."/>
            <person name="Nishio T."/>
            <person name="Okada M."/>
            <person name="Plessy C."/>
            <person name="Shibata K."/>
            <person name="Shiraki T."/>
            <person name="Suzuki S."/>
            <person name="Tagami M."/>
            <person name="Waki K."/>
            <person name="Watahiki A."/>
            <person name="Okamura-Oho Y."/>
            <person name="Suzuki H."/>
            <person name="Kawai J."/>
            <person name="Hayashizaki Y."/>
        </authorList>
    </citation>
    <scope>NUCLEOTIDE SEQUENCE [LARGE SCALE MRNA] OF 1-402 (ISOFORM 1)</scope>
    <scope>NUCLEOTIDE SEQUENCE [LARGE SCALE MRNA] OF 379-2323 (ISOFORM 2)</scope>
    <source>
        <strain>C57BL/6J</strain>
        <tissue>Cerebellum</tissue>
    </source>
</reference>
<reference key="2">
    <citation type="journal article" date="2009" name="PLoS Biol.">
        <title>Lineage-specific biology revealed by a finished genome assembly of the mouse.</title>
        <authorList>
            <person name="Church D.M."/>
            <person name="Goodstadt L."/>
            <person name="Hillier L.W."/>
            <person name="Zody M.C."/>
            <person name="Goldstein S."/>
            <person name="She X."/>
            <person name="Bult C.J."/>
            <person name="Agarwala R."/>
            <person name="Cherry J.L."/>
            <person name="DiCuccio M."/>
            <person name="Hlavina W."/>
            <person name="Kapustin Y."/>
            <person name="Meric P."/>
            <person name="Maglott D."/>
            <person name="Birtle Z."/>
            <person name="Marques A.C."/>
            <person name="Graves T."/>
            <person name="Zhou S."/>
            <person name="Teague B."/>
            <person name="Potamousis K."/>
            <person name="Churas C."/>
            <person name="Place M."/>
            <person name="Herschleb J."/>
            <person name="Runnheim R."/>
            <person name="Forrest D."/>
            <person name="Amos-Landgraf J."/>
            <person name="Schwartz D.C."/>
            <person name="Cheng Z."/>
            <person name="Lindblad-Toh K."/>
            <person name="Eichler E.E."/>
            <person name="Ponting C.P."/>
        </authorList>
    </citation>
    <scope>NUCLEOTIDE SEQUENCE [LARGE SCALE GENOMIC DNA]</scope>
    <source>
        <strain>C57BL/6J</strain>
    </source>
</reference>
<reference key="3">
    <citation type="journal article" date="2004" name="Genome Res.">
        <title>The status, quality, and expansion of the NIH full-length cDNA project: the Mammalian Gene Collection (MGC).</title>
        <authorList>
            <consortium name="The MGC Project Team"/>
        </authorList>
    </citation>
    <scope>NUCLEOTIDE SEQUENCE [LARGE SCALE MRNA] OF 71-2323 (ISOFORM 1)</scope>
    <scope>NUCLEOTIDE SEQUENCE [LARGE SCALE MRNA] OF 1232-2323 (ISOFORM 3)</scope>
    <source>
        <strain>129</strain>
        <strain>C57BL/6J</strain>
        <tissue>Head</tissue>
        <tissue>Mammary tumor</tissue>
    </source>
</reference>
<reference key="4">
    <citation type="journal article" date="2008" name="Development">
        <title>C2cd3 is required for cilia formation and Hedgehog signaling in mouse.</title>
        <authorList>
            <person name="Hoover A.N."/>
            <person name="Wynkoop A."/>
            <person name="Zeng H."/>
            <person name="Jia J."/>
            <person name="Niswander L.A."/>
            <person name="Liu A."/>
        </authorList>
    </citation>
    <scope>FUNCTION</scope>
    <scope>SUBCELLULAR LOCATION</scope>
    <scope>DISRUPTION PHENOTYPE</scope>
    <scope>DEVELOPMENTAL STAGE</scope>
</reference>
<reference key="5">
    <citation type="journal article" date="2010" name="Cell">
        <title>A tissue-specific atlas of mouse protein phosphorylation and expression.</title>
        <authorList>
            <person name="Huttlin E.L."/>
            <person name="Jedrychowski M.P."/>
            <person name="Elias J.E."/>
            <person name="Goswami T."/>
            <person name="Rad R."/>
            <person name="Beausoleil S.A."/>
            <person name="Villen J."/>
            <person name="Haas W."/>
            <person name="Sowa M.E."/>
            <person name="Gygi S.P."/>
        </authorList>
    </citation>
    <scope>PHOSPHORYLATION [LARGE SCALE ANALYSIS] AT SER-453</scope>
    <scope>IDENTIFICATION BY MASS SPECTROMETRY [LARGE SCALE ANALYSIS]</scope>
    <source>
        <tissue>Pancreas</tissue>
        <tissue>Testis</tissue>
    </source>
</reference>
<reference key="6">
    <citation type="journal article" date="2014" name="Nat. Genet.">
        <title>The oral-facial-digital syndrome gene C2CD3 encodes a positive regulator of centriole elongation.</title>
        <authorList>
            <person name="Thauvin-Robinet C."/>
            <person name="Lee J.S."/>
            <person name="Lopez E."/>
            <person name="Herranz-Perez V."/>
            <person name="Shida T."/>
            <person name="Franco B."/>
            <person name="Jego L."/>
            <person name="Ye F."/>
            <person name="Pasquier L."/>
            <person name="Loget P."/>
            <person name="Gigot N."/>
            <person name="Aral B."/>
            <person name="Lopes C.A."/>
            <person name="St-Onge J."/>
            <person name="Bruel A.L."/>
            <person name="Thevenon J."/>
            <person name="Gonzalez-Granero S."/>
            <person name="Alby C."/>
            <person name="Munnich A."/>
            <person name="Vekemans M."/>
            <person name="Huet F."/>
            <person name="Fry A.M."/>
            <person name="Saunier S."/>
            <person name="Riviere J.B."/>
            <person name="Attie-Bitach T."/>
            <person name="Garcia-Verdugo J.M."/>
            <person name="Faivre L."/>
            <person name="Megarbane A."/>
            <person name="Nachury M.V."/>
        </authorList>
    </citation>
    <scope>FUNCTION</scope>
</reference>
<reference key="7">
    <citation type="journal article" date="2014" name="Proc. Natl. Acad. Sci. U.S.A.">
        <title>C2cd3 is critical for centriolar distal appendage assembly and ciliary vesicle docking in mammals.</title>
        <authorList>
            <person name="Ye X."/>
            <person name="Zeng H."/>
            <person name="Ning G."/>
            <person name="Reiter J.F."/>
            <person name="Liu A."/>
        </authorList>
    </citation>
    <scope>FUNCTION</scope>
    <scope>SUBCELLULAR LOCATION</scope>
    <scope>INTERACTION WITH IFT88; BBS4 AND PCM1</scope>
</reference>
<organism>
    <name type="scientific">Mus musculus</name>
    <name type="common">Mouse</name>
    <dbReference type="NCBI Taxonomy" id="10090"/>
    <lineage>
        <taxon>Eukaryota</taxon>
        <taxon>Metazoa</taxon>
        <taxon>Chordata</taxon>
        <taxon>Craniata</taxon>
        <taxon>Vertebrata</taxon>
        <taxon>Euteleostomi</taxon>
        <taxon>Mammalia</taxon>
        <taxon>Eutheria</taxon>
        <taxon>Euarchontoglires</taxon>
        <taxon>Glires</taxon>
        <taxon>Rodentia</taxon>
        <taxon>Myomorpha</taxon>
        <taxon>Muroidea</taxon>
        <taxon>Muridae</taxon>
        <taxon>Murinae</taxon>
        <taxon>Mus</taxon>
        <taxon>Mus</taxon>
    </lineage>
</organism>
<evidence type="ECO:0000250" key="1"/>
<evidence type="ECO:0000250" key="2">
    <source>
        <dbReference type="UniProtKB" id="Q4AC94"/>
    </source>
</evidence>
<evidence type="ECO:0000255" key="3">
    <source>
        <dbReference type="PROSITE-ProRule" id="PRU00041"/>
    </source>
</evidence>
<evidence type="ECO:0000256" key="4">
    <source>
        <dbReference type="SAM" id="MobiDB-lite"/>
    </source>
</evidence>
<evidence type="ECO:0000269" key="5">
    <source>
    </source>
</evidence>
<evidence type="ECO:0000269" key="6">
    <source>
    </source>
</evidence>
<evidence type="ECO:0000269" key="7">
    <source>
    </source>
</evidence>
<evidence type="ECO:0000303" key="8">
    <source>
    </source>
</evidence>
<evidence type="ECO:0000303" key="9">
    <source>
    </source>
</evidence>
<evidence type="ECO:0000305" key="10"/>
<evidence type="ECO:0007744" key="11">
    <source>
    </source>
</evidence>
<keyword id="KW-0025">Alternative splicing</keyword>
<keyword id="KW-0966">Cell projection</keyword>
<keyword id="KW-0969">Cilium</keyword>
<keyword id="KW-0970">Cilium biogenesis/degradation</keyword>
<keyword id="KW-0963">Cytoplasm</keyword>
<keyword id="KW-0206">Cytoskeleton</keyword>
<keyword id="KW-0597">Phosphoprotein</keyword>
<keyword id="KW-1185">Reference proteome</keyword>
<keyword id="KW-0677">Repeat</keyword>
<name>C2CD3_MOUSE</name>
<dbReference type="EMBL" id="AK047412">
    <property type="protein sequence ID" value="BAC33048.1"/>
    <property type="molecule type" value="mRNA"/>
</dbReference>
<dbReference type="EMBL" id="AK148365">
    <property type="protein sequence ID" value="BAE28507.1"/>
    <property type="molecule type" value="mRNA"/>
</dbReference>
<dbReference type="EMBL" id="AC117215">
    <property type="status" value="NOT_ANNOTATED_CDS"/>
    <property type="molecule type" value="Genomic_DNA"/>
</dbReference>
<dbReference type="EMBL" id="AC122269">
    <property type="status" value="NOT_ANNOTATED_CDS"/>
    <property type="molecule type" value="Genomic_DNA"/>
</dbReference>
<dbReference type="EMBL" id="AC151839">
    <property type="status" value="NOT_ANNOTATED_CDS"/>
    <property type="molecule type" value="Genomic_DNA"/>
</dbReference>
<dbReference type="EMBL" id="BC046408">
    <property type="protein sequence ID" value="AAH46408.1"/>
    <property type="molecule type" value="mRNA"/>
</dbReference>
<dbReference type="EMBL" id="BC094430">
    <property type="protein sequence ID" value="AAH94430.1"/>
    <property type="status" value="ALT_INIT"/>
    <property type="molecule type" value="mRNA"/>
</dbReference>
<dbReference type="CCDS" id="CCDS57568.1">
    <molecule id="Q52KB6-1"/>
</dbReference>
<dbReference type="RefSeq" id="NP_001017985.2">
    <molecule id="Q52KB6-1"/>
    <property type="nucleotide sequence ID" value="NM_001017985.3"/>
</dbReference>
<dbReference type="RefSeq" id="XP_030098504.1">
    <molecule id="Q52KB6-2"/>
    <property type="nucleotide sequence ID" value="XM_030242644.2"/>
</dbReference>
<dbReference type="BioGRID" id="234966">
    <property type="interactions" value="1"/>
</dbReference>
<dbReference type="FunCoup" id="Q52KB6">
    <property type="interactions" value="1964"/>
</dbReference>
<dbReference type="IntAct" id="Q52KB6">
    <property type="interactions" value="1"/>
</dbReference>
<dbReference type="STRING" id="10090.ENSMUSP00000062637"/>
<dbReference type="GlyGen" id="Q52KB6">
    <property type="glycosylation" value="2 sites, 1 O-linked glycan (1 site)"/>
</dbReference>
<dbReference type="iPTMnet" id="Q52KB6"/>
<dbReference type="PhosphoSitePlus" id="Q52KB6"/>
<dbReference type="SwissPalm" id="Q52KB6"/>
<dbReference type="jPOST" id="Q52KB6"/>
<dbReference type="PaxDb" id="10090-ENSMUSP00000062637"/>
<dbReference type="ProteomicsDB" id="281712">
    <molecule id="Q52KB6-1"/>
</dbReference>
<dbReference type="ProteomicsDB" id="281713">
    <molecule id="Q52KB6-2"/>
</dbReference>
<dbReference type="ProteomicsDB" id="281714">
    <molecule id="Q52KB6-3"/>
</dbReference>
<dbReference type="Antibodypedia" id="48039">
    <property type="antibodies" value="142 antibodies from 18 providers"/>
</dbReference>
<dbReference type="Ensembl" id="ENSMUST00000051777.15">
    <molecule id="Q52KB6-1"/>
    <property type="protein sequence ID" value="ENSMUSP00000062637.8"/>
    <property type="gene ID" value="ENSMUSG00000047248.21"/>
</dbReference>
<dbReference type="GeneID" id="277939"/>
<dbReference type="KEGG" id="mmu:277939"/>
<dbReference type="UCSC" id="uc029wni.1">
    <molecule id="Q52KB6-1"/>
    <property type="organism name" value="mouse"/>
</dbReference>
<dbReference type="AGR" id="MGI:2142166"/>
<dbReference type="CTD" id="26005"/>
<dbReference type="MGI" id="MGI:2142166">
    <property type="gene designation" value="C2cd3"/>
</dbReference>
<dbReference type="VEuPathDB" id="HostDB:ENSMUSG00000047248"/>
<dbReference type="eggNOG" id="ENOG502QRQ8">
    <property type="taxonomic scope" value="Eukaryota"/>
</dbReference>
<dbReference type="GeneTree" id="ENSGT00510000048072"/>
<dbReference type="InParanoid" id="Q52KB6"/>
<dbReference type="OMA" id="CYMPVVD"/>
<dbReference type="OrthoDB" id="79771at2759"/>
<dbReference type="PhylomeDB" id="Q52KB6"/>
<dbReference type="TreeFam" id="TF323591"/>
<dbReference type="Reactome" id="R-MMU-5620912">
    <property type="pathway name" value="Anchoring of the basal body to the plasma membrane"/>
</dbReference>
<dbReference type="BioGRID-ORCS" id="277939">
    <property type="hits" value="6 hits in 61 CRISPR screens"/>
</dbReference>
<dbReference type="ChiTaRS" id="C2cd3">
    <property type="organism name" value="mouse"/>
</dbReference>
<dbReference type="PRO" id="PR:Q52KB6"/>
<dbReference type="Proteomes" id="UP000000589">
    <property type="component" value="Chromosome 7"/>
</dbReference>
<dbReference type="RNAct" id="Q52KB6">
    <property type="molecule type" value="protein"/>
</dbReference>
<dbReference type="Bgee" id="ENSMUSG00000047248">
    <property type="expression patterns" value="Expressed in ventricular zone and 224 other cell types or tissues"/>
</dbReference>
<dbReference type="ExpressionAtlas" id="Q52KB6">
    <property type="expression patterns" value="baseline and differential"/>
</dbReference>
<dbReference type="GO" id="GO:0034451">
    <property type="term" value="C:centriolar satellite"/>
    <property type="evidence" value="ECO:0000314"/>
    <property type="project" value="MGI"/>
</dbReference>
<dbReference type="GO" id="GO:0005814">
    <property type="term" value="C:centriole"/>
    <property type="evidence" value="ECO:0000314"/>
    <property type="project" value="MGI"/>
</dbReference>
<dbReference type="GO" id="GO:0036064">
    <property type="term" value="C:ciliary basal body"/>
    <property type="evidence" value="ECO:0000314"/>
    <property type="project" value="UniProtKB"/>
</dbReference>
<dbReference type="GO" id="GO:0005737">
    <property type="term" value="C:cytoplasm"/>
    <property type="evidence" value="ECO:0007669"/>
    <property type="project" value="UniProtKB-KW"/>
</dbReference>
<dbReference type="GO" id="GO:0007420">
    <property type="term" value="P:brain development"/>
    <property type="evidence" value="ECO:0000315"/>
    <property type="project" value="MGI"/>
</dbReference>
<dbReference type="GO" id="GO:0061511">
    <property type="term" value="P:centriole elongation"/>
    <property type="evidence" value="ECO:0000314"/>
    <property type="project" value="UniProtKB"/>
</dbReference>
<dbReference type="GO" id="GO:0060271">
    <property type="term" value="P:cilium assembly"/>
    <property type="evidence" value="ECO:0000315"/>
    <property type="project" value="MGI"/>
</dbReference>
<dbReference type="GO" id="GO:0042733">
    <property type="term" value="P:embryonic digit morphogenesis"/>
    <property type="evidence" value="ECO:0000315"/>
    <property type="project" value="MGI"/>
</dbReference>
<dbReference type="GO" id="GO:0030326">
    <property type="term" value="P:embryonic limb morphogenesis"/>
    <property type="evidence" value="ECO:0000315"/>
    <property type="project" value="MGI"/>
</dbReference>
<dbReference type="GO" id="GO:0001947">
    <property type="term" value="P:heart looping"/>
    <property type="evidence" value="ECO:0000315"/>
    <property type="project" value="MGI"/>
</dbReference>
<dbReference type="GO" id="GO:0001701">
    <property type="term" value="P:in utero embryonic development"/>
    <property type="evidence" value="ECO:0000315"/>
    <property type="project" value="MGI"/>
</dbReference>
<dbReference type="GO" id="GO:0021997">
    <property type="term" value="P:neural plate axis specification"/>
    <property type="evidence" value="ECO:0000315"/>
    <property type="project" value="MGI"/>
</dbReference>
<dbReference type="GO" id="GO:0021915">
    <property type="term" value="P:neural tube development"/>
    <property type="evidence" value="ECO:0000315"/>
    <property type="project" value="MGI"/>
</dbReference>
<dbReference type="GO" id="GO:1905515">
    <property type="term" value="P:non-motile cilium assembly"/>
    <property type="evidence" value="ECO:0000250"/>
    <property type="project" value="UniProtKB"/>
</dbReference>
<dbReference type="GO" id="GO:0007389">
    <property type="term" value="P:pattern specification process"/>
    <property type="evidence" value="ECO:0000315"/>
    <property type="project" value="MGI"/>
</dbReference>
<dbReference type="GO" id="GO:0071539">
    <property type="term" value="P:protein localization to centrosome"/>
    <property type="evidence" value="ECO:0000315"/>
    <property type="project" value="MGI"/>
</dbReference>
<dbReference type="GO" id="GO:0016485">
    <property type="term" value="P:protein processing"/>
    <property type="evidence" value="ECO:0000315"/>
    <property type="project" value="MGI"/>
</dbReference>
<dbReference type="GO" id="GO:0030162">
    <property type="term" value="P:regulation of proteolysis"/>
    <property type="evidence" value="ECO:0000314"/>
    <property type="project" value="MGI"/>
</dbReference>
<dbReference type="GO" id="GO:0008589">
    <property type="term" value="P:regulation of smoothened signaling pathway"/>
    <property type="evidence" value="ECO:0000315"/>
    <property type="project" value="MGI"/>
</dbReference>
<dbReference type="CDD" id="cd00030">
    <property type="entry name" value="C2"/>
    <property type="match status" value="1"/>
</dbReference>
<dbReference type="CDD" id="cd08683">
    <property type="entry name" value="C2_C2cd3"/>
    <property type="match status" value="1"/>
</dbReference>
<dbReference type="FunFam" id="2.60.40.150:FF:000175">
    <property type="entry name" value="C2 calcium dependent domain containing 3"/>
    <property type="match status" value="1"/>
</dbReference>
<dbReference type="Gene3D" id="2.60.40.150">
    <property type="entry name" value="C2 domain"/>
    <property type="match status" value="2"/>
</dbReference>
<dbReference type="InterPro" id="IPR037775">
    <property type="entry name" value="C2_C2CD3"/>
</dbReference>
<dbReference type="InterPro" id="IPR000008">
    <property type="entry name" value="C2_dom"/>
</dbReference>
<dbReference type="InterPro" id="IPR035892">
    <property type="entry name" value="C2_domain_sf"/>
</dbReference>
<dbReference type="PANTHER" id="PTHR21254">
    <property type="entry name" value="C2 DOMAIN-CONTAINING PROTEIN 3"/>
    <property type="match status" value="1"/>
</dbReference>
<dbReference type="PANTHER" id="PTHR21254:SF1">
    <property type="entry name" value="C2 DOMAIN-CONTAINING PROTEIN 3"/>
    <property type="match status" value="1"/>
</dbReference>
<dbReference type="Pfam" id="PF00168">
    <property type="entry name" value="C2"/>
    <property type="match status" value="2"/>
</dbReference>
<dbReference type="Pfam" id="PF25339">
    <property type="entry name" value="C2_C2CD3_N"/>
    <property type="match status" value="1"/>
</dbReference>
<dbReference type="SMART" id="SM00239">
    <property type="entry name" value="C2"/>
    <property type="match status" value="5"/>
</dbReference>
<dbReference type="SUPFAM" id="SSF49562">
    <property type="entry name" value="C2 domain (Calcium/lipid-binding domain, CaLB)"/>
    <property type="match status" value="4"/>
</dbReference>
<dbReference type="PROSITE" id="PS50004">
    <property type="entry name" value="C2"/>
    <property type="match status" value="6"/>
</dbReference>
<comment type="function">
    <text evidence="5 6 7">Component of the centrioles that acts as a positive regulator of centriole elongation (PubMed:24997988). Promotes assembly of centriolar distal appendage, a structure at the distal end of the mother centriole that acts as an anchor of the cilium, and is required for recruitment of centriolar distal appendages proteins CEP83, SCLT1, CEP89, FBF1 and CEP164. Not required for centriolar satellite integrity or RAB8 activation (PubMed:24469809). Required for primary cilium formation. Required for sonic hedgehog/SHH signaling and for proteolytic processing of GLI3 (PubMed:19004860).</text>
</comment>
<comment type="subunit">
    <text evidence="1 6">Interacts with OFD1; OFD1 may act as a negative regulator of C2CD3. Associates with the BBSome complex (By similarity). Interacts with IFT88, BBS4 and PCM1.</text>
</comment>
<comment type="subcellular location">
    <subcellularLocation>
        <location>Cytoplasm</location>
        <location>Cytoskeleton</location>
        <location>Cilium basal body</location>
    </subcellularLocation>
    <subcellularLocation>
        <location>Cytoplasm</location>
        <location>Cytoskeleton</location>
        <location>Microtubule organizing center</location>
        <location>Centrosome</location>
        <location>Centriole</location>
    </subcellularLocation>
    <text evidence="6">Localizes to centrioles and procentrioles both in interphase and mitosis. Localizes to centriolar satellites, localization is dependent on PCM1 and dynein-mediated retrograde transport. Also localizes to the distal ends of the mother and daughter centrioles (PubMed:24469809).</text>
</comment>
<comment type="alternative products">
    <event type="alternative splicing"/>
    <isoform>
        <id>Q52KB6-1</id>
        <name>1</name>
        <sequence type="displayed"/>
    </isoform>
    <isoform>
        <id>Q52KB6-2</id>
        <name>2</name>
        <sequence type="described" ref="VSP_029449 VSP_029450"/>
    </isoform>
    <isoform>
        <id>Q52KB6-3</id>
        <name>3</name>
        <sequence type="described" ref="VSP_029451 VSP_029452"/>
    </isoform>
</comment>
<comment type="developmental stage">
    <text evidence="5">Ubiquitously expressed in embryos between 8.5 dpc and 10.5 dpc.</text>
</comment>
<comment type="disruption phenotype">
    <text evidence="5">Embryonic lethality between 11 dpc and 13 dpc. Embryos show multiple defects including neural tube defects, abnormal dorsal-ventral patterning of the spinal cord, a defect in left-right axis determination and severe polydactyly (extra digits).</text>
</comment>
<comment type="sequence caution" evidence="10">
    <conflict type="erroneous initiation">
        <sequence resource="EMBL-CDS" id="AAH94430"/>
    </conflict>
    <text>Truncated N-terminus.</text>
</comment>
<sequence length="2323" mass="255346">MKQRKGQGPGGGRGRKKRGLSDISPSTSLPPLVEGQLRCFLKLTINKVVWKIAKPPTSVLVRVRWWGETSDGTLFCPRDALQTEPKAVRTTTRYGIRCGPKQFTSYLTDMAVLVLEVITKFDHLPVGRVQISGLAQLSPTHQINGFFTIVSPASKKLGELQVSLALEPLSETYDSYKPLPATEVTKNVLLSERELRENTESSNTQSMIPSRSCRGPAIKIDGKELAGHSSRSTTPRGKDHLYFAENSDAVKGSLCGLQQHLNQGTNVETITLRGKAPQKQLSLLNSSEFQPQISTVAKSHSDSCILSSNTPPAKDLLSALLEQGNKLRNAMLISAMNSNPDTSMLLDKVPPPMTEAIPRSSALNSSENHFKGHSADHLLPLADTGAIQLLLGSAELSQGHFWNGLGSPPDSPTPGSDEYCSSDLNDPQYDQSLLENLFYTVPKSDVGTSELPSEDDGVEPSRTMNQSKASGRSKVVESKEQKQKRAAVKKSRNPIDQQELSRTPGHTPAMSLSVDRLALLGRVHSVRIIVETMGVPPDSPHMTPSRKNFAGKPPKPTAAKKRTFFVEYHFPVGFSKSGLGKTALITEVVRLASSKITDGVVKFQQRFVCPVEFGGPMIEHWWDSNLIFQIYAKKTPQKKPEVIGSASLPLRAVIQSELLSFSSQLPVQQENGLSSLGPLKVTMELVLGHKDFTGISAKLSSSTQPAPVSAATSSDTILPETGQDTACTRNPQSSNKIHEETTKKTQNLVLPDQESANSVASNSSIFMAVPSCNLVHQINGSNKESGLLLHVLLMVPDGKDFVFGEREKQPSCNVYLNCKLFSTEEVTRSVVSWGTAQPVFNFSQVIPVSLTSKCLERLKNNVMIIETWNKVRSPGQDKLLGLVKLPLHQFYMSFKDPKISRLLLDARYPVVAVDSYMPVIDVFSGHQNGSLRVFLAMGSSAQIMMLQRLKNEEGTLPPFSPRPAHFLDQPPVASVAMPEKQGTRLMEHHFEFCVAMVKGLMPLQATVWGEADCYVQYYFPFQDSQPSVLQGPDFLENGITLKPFRTSTTLCVPDPVFNSEHHHSLLLPTDVPVQRLLLSAFSSQGLVPGGGVQFEVWCRYYYPNVRDQMVAKGTLPLSRVCAMVTMQYREDVGMQSFNLPLTSRLEHSKELKNQSSGFLDVGLRYRRSPRTAEGILAARAVSISVHIIRACGLQAAAKALAEQEPALQFSATVGVNASVTAHLSFLPKGEQRQTRPVACSFCPEFSHHIEFPCNLVTQHCSGEACFLAELLEFAEIIFAIYHENTKSVSDITSIQSCKDYLLGIVKVPTKDLLVKRSGITGWYPVILPEDKGLPQDLDLMQKIVGGLELSVSFAHPGDRERVLEAAELLGWSFESIPKDLVKKEEEVPATVTISTPRLWLPIHCVLLAGHMNIHKNTYCYLRYKLYNQEAFWTPLRKPKESTNKNQVLITFKASKRAEVTRSQSLLWYFREEKLEIQVWRAYGNDNLERPHQTDSWIGSAYVDLSRLGEKSPRTLTISGVYPLFGRNASDLSGAALRIHVLLSPLSPHTEPARELDSMDCSSHSESEQHPRKSDALQLSPPHVLQTSPTSTQVHGNSAAAQVCPAQEGPPELAGTFAVSILVERAMHLSLKGSPLTDRKVSVPSCCVSFATATELSPVYTHVVENTDSPIWGFHQQARLSKELLLDPHQTLVFKVWHKGDEERVVGFASVDLSPLLSGFQFICGWYNITDFSGECQGQIKVAISPMESLMHLKEERQARRGIDTPGALIPLFSALSFPASAGCDAFPRPIARHVEGQLAHTSPKEDGLSSPARNGAIRSQAARHEEHVQNIRRFHESLQHGEAVLTSDEKLTTAPSSSHTSILTSLRKNLSELDEIQKYFSQKLSKPFLPFSSQSSPAVSQSQESQRDPVAAGTGRQDPENQCILEKSNHLVSQVSSLISDLQTLTRGSQAALTSQQARSRSRAVTTIPDAQGTEAAGEGSTTLEEPLAGAIEASTDSLPPPVEEPSKGGGMLHESLEQTMPITRVQSIDDTEVGPDYSDEDYEEDIIEPRTLNEITTVTDRTSPWSSFMSDMSEVLSPQPTEVQREGPSCPPEPFPREELKVKSSPQKAVSPQPAQGSPSQSGVCEGGAYKIEVEDLASAKPQPVPSLTFSEAQEGSDSVGWRASQINQVRKPMPEMLAESEAFSSEFSDSSESFETFPLHLPSQSKREDYKDSPAVRQKQVPTGSEVSTRQTLLLPEPVVVPNFFLPPQQLEASLRMISHSPGLPPAATTDQDKSEATRGALAQRPCRPRPYSIPPNLPEEETRRIARIFSSQYSKKTEET</sequence>